<evidence type="ECO:0000250" key="1"/>
<evidence type="ECO:0000250" key="2">
    <source>
        <dbReference type="UniProtKB" id="Q13438"/>
    </source>
</evidence>
<evidence type="ECO:0000255" key="3"/>
<evidence type="ECO:0000255" key="4">
    <source>
        <dbReference type="PROSITE-ProRule" id="PRU01262"/>
    </source>
</evidence>
<evidence type="ECO:0000255" key="5">
    <source>
        <dbReference type="PROSITE-ProRule" id="PRU10138"/>
    </source>
</evidence>
<evidence type="ECO:0000256" key="6">
    <source>
        <dbReference type="SAM" id="MobiDB-lite"/>
    </source>
</evidence>
<evidence type="ECO:0000305" key="7"/>
<accession>Q872S3</accession>
<accession>Q1K8N3</accession>
<proteinExistence type="inferred from homology"/>
<gene>
    <name type="primary">yos-9</name>
    <name type="ORF">B13B3.010</name>
    <name type="ORF">NCU08445</name>
</gene>
<protein>
    <recommendedName>
        <fullName>Protein OS-9 homolog</fullName>
    </recommendedName>
</protein>
<organism>
    <name type="scientific">Neurospora crassa (strain ATCC 24698 / 74-OR23-1A / CBS 708.71 / DSM 1257 / FGSC 987)</name>
    <dbReference type="NCBI Taxonomy" id="367110"/>
    <lineage>
        <taxon>Eukaryota</taxon>
        <taxon>Fungi</taxon>
        <taxon>Dikarya</taxon>
        <taxon>Ascomycota</taxon>
        <taxon>Pezizomycotina</taxon>
        <taxon>Sordariomycetes</taxon>
        <taxon>Sordariomycetidae</taxon>
        <taxon>Sordariales</taxon>
        <taxon>Sordariaceae</taxon>
        <taxon>Neurospora</taxon>
    </lineage>
</organism>
<name>OS9_NEUCR</name>
<dbReference type="EMBL" id="BX284762">
    <property type="protein sequence ID" value="CAD70506.1"/>
    <property type="molecule type" value="Genomic_DNA"/>
</dbReference>
<dbReference type="EMBL" id="CM002237">
    <property type="protein sequence ID" value="EAA34179.1"/>
    <property type="molecule type" value="Genomic_DNA"/>
</dbReference>
<dbReference type="RefSeq" id="XP_963415.1">
    <property type="nucleotide sequence ID" value="XM_958322.2"/>
</dbReference>
<dbReference type="SMR" id="Q872S3"/>
<dbReference type="STRING" id="367110.Q872S3"/>
<dbReference type="GlyCosmos" id="Q872S3">
    <property type="glycosylation" value="1 site, No reported glycans"/>
</dbReference>
<dbReference type="PaxDb" id="5141-EFNCRP00000007811"/>
<dbReference type="EnsemblFungi" id="EAA34179">
    <property type="protein sequence ID" value="EAA34179"/>
    <property type="gene ID" value="NCU08445"/>
</dbReference>
<dbReference type="GeneID" id="3879555"/>
<dbReference type="KEGG" id="ncr:NCU08445"/>
<dbReference type="VEuPathDB" id="FungiDB:NCU08445"/>
<dbReference type="HOGENOM" id="CLU_025069_0_0_1"/>
<dbReference type="InParanoid" id="Q872S3"/>
<dbReference type="OMA" id="AYLMVIH"/>
<dbReference type="OrthoDB" id="448954at2759"/>
<dbReference type="Proteomes" id="UP000001805">
    <property type="component" value="Chromosome 6, Linkage Group II"/>
</dbReference>
<dbReference type="GO" id="GO:0005788">
    <property type="term" value="C:endoplasmic reticulum lumen"/>
    <property type="evidence" value="ECO:0000318"/>
    <property type="project" value="GO_Central"/>
</dbReference>
<dbReference type="GO" id="GO:0005789">
    <property type="term" value="C:endoplasmic reticulum membrane"/>
    <property type="evidence" value="ECO:0007669"/>
    <property type="project" value="UniProtKB-SubCell"/>
</dbReference>
<dbReference type="GO" id="GO:0030246">
    <property type="term" value="F:carbohydrate binding"/>
    <property type="evidence" value="ECO:0007669"/>
    <property type="project" value="UniProtKB-KW"/>
</dbReference>
<dbReference type="GO" id="GO:0030968">
    <property type="term" value="P:endoplasmic reticulum unfolded protein response"/>
    <property type="evidence" value="ECO:0007669"/>
    <property type="project" value="InterPro"/>
</dbReference>
<dbReference type="GO" id="GO:0030970">
    <property type="term" value="P:retrograde protein transport, ER to cytosol"/>
    <property type="evidence" value="ECO:0000318"/>
    <property type="project" value="GO_Central"/>
</dbReference>
<dbReference type="Gene3D" id="2.70.130.10">
    <property type="entry name" value="Mannose-6-phosphate receptor binding domain"/>
    <property type="match status" value="1"/>
</dbReference>
<dbReference type="InterPro" id="IPR009011">
    <property type="entry name" value="Man6P_isomerase_rcpt-bd_dom_sf"/>
</dbReference>
<dbReference type="InterPro" id="IPR044865">
    <property type="entry name" value="MRH_dom"/>
</dbReference>
<dbReference type="InterPro" id="IPR045149">
    <property type="entry name" value="OS-9-like"/>
</dbReference>
<dbReference type="InterPro" id="IPR012913">
    <property type="entry name" value="OS9-like_dom"/>
</dbReference>
<dbReference type="PANTHER" id="PTHR15414:SF0">
    <property type="entry name" value="ENDOPLASMIC RETICULUM LECTIN 1"/>
    <property type="match status" value="1"/>
</dbReference>
<dbReference type="PANTHER" id="PTHR15414">
    <property type="entry name" value="OS-9-RELATED"/>
    <property type="match status" value="1"/>
</dbReference>
<dbReference type="Pfam" id="PF07915">
    <property type="entry name" value="PRKCSH"/>
    <property type="match status" value="1"/>
</dbReference>
<dbReference type="SUPFAM" id="SSF50911">
    <property type="entry name" value="Mannose 6-phosphate receptor domain"/>
    <property type="match status" value="1"/>
</dbReference>
<dbReference type="PROSITE" id="PS00014">
    <property type="entry name" value="ER_TARGET"/>
    <property type="match status" value="1"/>
</dbReference>
<dbReference type="PROSITE" id="PS51914">
    <property type="entry name" value="MRH"/>
    <property type="match status" value="1"/>
</dbReference>
<feature type="signal peptide" evidence="3">
    <location>
        <begin position="1"/>
        <end position="19"/>
    </location>
</feature>
<feature type="chain" id="PRO_0000043273" description="Protein OS-9 homolog">
    <location>
        <begin position="20"/>
        <end position="590"/>
    </location>
</feature>
<feature type="domain" description="MRH" evidence="4">
    <location>
        <begin position="167"/>
        <end position="312"/>
    </location>
</feature>
<feature type="region of interest" description="Disordered" evidence="6">
    <location>
        <begin position="83"/>
        <end position="106"/>
    </location>
</feature>
<feature type="region of interest" description="Disordered" evidence="6">
    <location>
        <begin position="198"/>
        <end position="248"/>
    </location>
</feature>
<feature type="region of interest" description="Disordered" evidence="6">
    <location>
        <begin position="357"/>
        <end position="376"/>
    </location>
</feature>
<feature type="region of interest" description="Disordered" evidence="6">
    <location>
        <begin position="436"/>
        <end position="472"/>
    </location>
</feature>
<feature type="region of interest" description="Disordered" evidence="6">
    <location>
        <begin position="545"/>
        <end position="590"/>
    </location>
</feature>
<feature type="short sequence motif" description="Prevents secretion from ER" evidence="5">
    <location>
        <begin position="587"/>
        <end position="590"/>
    </location>
</feature>
<feature type="compositionally biased region" description="Basic residues" evidence="6">
    <location>
        <begin position="446"/>
        <end position="455"/>
    </location>
</feature>
<feature type="compositionally biased region" description="Basic and acidic residues" evidence="6">
    <location>
        <begin position="556"/>
        <end position="568"/>
    </location>
</feature>
<feature type="compositionally biased region" description="Basic and acidic residues" evidence="6">
    <location>
        <begin position="579"/>
        <end position="590"/>
    </location>
</feature>
<feature type="binding site" evidence="2">
    <location>
        <position position="176"/>
    </location>
    <ligand>
        <name>a mannooligosaccharide derivative</name>
        <dbReference type="ChEBI" id="CHEBI:71274"/>
    </ligand>
</feature>
<feature type="binding site" evidence="2">
    <location>
        <position position="177"/>
    </location>
    <ligand>
        <name>a mannooligosaccharide derivative</name>
        <dbReference type="ChEBI" id="CHEBI:71274"/>
    </ligand>
</feature>
<feature type="binding site" evidence="2">
    <location>
        <position position="189"/>
    </location>
    <ligand>
        <name>a mannooligosaccharide derivative</name>
        <dbReference type="ChEBI" id="CHEBI:71274"/>
    </ligand>
</feature>
<feature type="binding site" evidence="2">
    <location>
        <position position="266"/>
    </location>
    <ligand>
        <name>a mannooligosaccharide derivative</name>
        <dbReference type="ChEBI" id="CHEBI:71274"/>
    </ligand>
</feature>
<feature type="binding site" evidence="2">
    <location>
        <position position="272"/>
    </location>
    <ligand>
        <name>a mannooligosaccharide derivative</name>
        <dbReference type="ChEBI" id="CHEBI:71274"/>
    </ligand>
</feature>
<feature type="binding site" evidence="2">
    <location>
        <position position="294"/>
    </location>
    <ligand>
        <name>a mannooligosaccharide derivative</name>
        <dbReference type="ChEBI" id="CHEBI:71274"/>
    </ligand>
</feature>
<feature type="binding site" evidence="2">
    <location>
        <position position="300"/>
    </location>
    <ligand>
        <name>a mannooligosaccharide derivative</name>
        <dbReference type="ChEBI" id="CHEBI:71274"/>
    </ligand>
</feature>
<feature type="glycosylation site" description="N-linked (GlcNAc...) asparagine" evidence="3">
    <location>
        <position position="136"/>
    </location>
</feature>
<feature type="disulfide bond" evidence="4">
    <location>
        <begin position="169"/>
        <end position="182"/>
    </location>
</feature>
<feature type="disulfide bond" evidence="4">
    <location>
        <begin position="265"/>
        <end position="298"/>
    </location>
</feature>
<feature type="disulfide bond" evidence="4">
    <location>
        <begin position="280"/>
        <end position="310"/>
    </location>
</feature>
<reference key="1">
    <citation type="journal article" date="2003" name="Nucleic Acids Res.">
        <title>What's in the genome of a filamentous fungus? Analysis of the Neurospora genome sequence.</title>
        <authorList>
            <person name="Mannhaupt G."/>
            <person name="Montrone C."/>
            <person name="Haase D."/>
            <person name="Mewes H.-W."/>
            <person name="Aign V."/>
            <person name="Hoheisel J.D."/>
            <person name="Fartmann B."/>
            <person name="Nyakatura G."/>
            <person name="Kempken F."/>
            <person name="Maier J."/>
            <person name="Schulte U."/>
        </authorList>
    </citation>
    <scope>NUCLEOTIDE SEQUENCE [LARGE SCALE GENOMIC DNA]</scope>
    <source>
        <strain>ATCC 24698 / 74-OR23-1A / CBS 708.71 / DSM 1257 / FGSC 987</strain>
    </source>
</reference>
<reference key="2">
    <citation type="journal article" date="2003" name="Nature">
        <title>The genome sequence of the filamentous fungus Neurospora crassa.</title>
        <authorList>
            <person name="Galagan J.E."/>
            <person name="Calvo S.E."/>
            <person name="Borkovich K.A."/>
            <person name="Selker E.U."/>
            <person name="Read N.D."/>
            <person name="Jaffe D.B."/>
            <person name="FitzHugh W."/>
            <person name="Ma L.-J."/>
            <person name="Smirnov S."/>
            <person name="Purcell S."/>
            <person name="Rehman B."/>
            <person name="Elkins T."/>
            <person name="Engels R."/>
            <person name="Wang S."/>
            <person name="Nielsen C.B."/>
            <person name="Butler J."/>
            <person name="Endrizzi M."/>
            <person name="Qui D."/>
            <person name="Ianakiev P."/>
            <person name="Bell-Pedersen D."/>
            <person name="Nelson M.A."/>
            <person name="Werner-Washburne M."/>
            <person name="Selitrennikoff C.P."/>
            <person name="Kinsey J.A."/>
            <person name="Braun E.L."/>
            <person name="Zelter A."/>
            <person name="Schulte U."/>
            <person name="Kothe G.O."/>
            <person name="Jedd G."/>
            <person name="Mewes H.-W."/>
            <person name="Staben C."/>
            <person name="Marcotte E."/>
            <person name="Greenberg D."/>
            <person name="Roy A."/>
            <person name="Foley K."/>
            <person name="Naylor J."/>
            <person name="Stange-Thomann N."/>
            <person name="Barrett R."/>
            <person name="Gnerre S."/>
            <person name="Kamal M."/>
            <person name="Kamvysselis M."/>
            <person name="Mauceli E.W."/>
            <person name="Bielke C."/>
            <person name="Rudd S."/>
            <person name="Frishman D."/>
            <person name="Krystofova S."/>
            <person name="Rasmussen C."/>
            <person name="Metzenberg R.L."/>
            <person name="Perkins D.D."/>
            <person name="Kroken S."/>
            <person name="Cogoni C."/>
            <person name="Macino G."/>
            <person name="Catcheside D.E.A."/>
            <person name="Li W."/>
            <person name="Pratt R.J."/>
            <person name="Osmani S.A."/>
            <person name="DeSouza C.P.C."/>
            <person name="Glass N.L."/>
            <person name="Orbach M.J."/>
            <person name="Berglund J.A."/>
            <person name="Voelker R."/>
            <person name="Yarden O."/>
            <person name="Plamann M."/>
            <person name="Seiler S."/>
            <person name="Dunlap J.C."/>
            <person name="Radford A."/>
            <person name="Aramayo R."/>
            <person name="Natvig D.O."/>
            <person name="Alex L.A."/>
            <person name="Mannhaupt G."/>
            <person name="Ebbole D.J."/>
            <person name="Freitag M."/>
            <person name="Paulsen I."/>
            <person name="Sachs M.S."/>
            <person name="Lander E.S."/>
            <person name="Nusbaum C."/>
            <person name="Birren B.W."/>
        </authorList>
    </citation>
    <scope>NUCLEOTIDE SEQUENCE [LARGE SCALE GENOMIC DNA]</scope>
    <source>
        <strain>ATCC 24698 / 74-OR23-1A / CBS 708.71 / DSM 1257 / FGSC 987</strain>
    </source>
</reference>
<keyword id="KW-1015">Disulfide bond</keyword>
<keyword id="KW-0256">Endoplasmic reticulum</keyword>
<keyword id="KW-0325">Glycoprotein</keyword>
<keyword id="KW-0430">Lectin</keyword>
<keyword id="KW-0472">Membrane</keyword>
<keyword id="KW-1185">Reference proteome</keyword>
<keyword id="KW-0732">Signal</keyword>
<comment type="function">
    <text evidence="1">Lectin involved in the quality control of the secretory pathway. As a member of the endoplasmic reticulum-associated degradation lumenal (ERAD-L) surveillance system, targets misfolded endoplasmic reticulum lumenal glycoproteins for degradation (By similarity).</text>
</comment>
<comment type="subunit">
    <text evidence="1">Interacts with missfolded ER lumenal proteins.</text>
</comment>
<comment type="subcellular location">
    <subcellularLocation>
        <location evidence="5">Endoplasmic reticulum membrane</location>
        <topology evidence="1">Peripheral membrane protein</topology>
        <orientation evidence="1">Lumenal side</orientation>
    </subcellularLocation>
</comment>
<comment type="similarity">
    <text evidence="7">Belongs to the OS-9 family.</text>
</comment>
<sequence length="590" mass="64567">MRRPSLALLALSSLPFGSARQPASFSIHQDLLAHPQFEVIFSDSYVFEADAFALLEAANKTPKPTPASDGAHDGSTTRTDLTSAIRESATANADTDNGDESIGGTSPLRETYELIAHPPMRYLCSIPIIAPPPALNKTATELAKAEEAREVTRAYNKGWELMRGLENQCLHFVSGWWSYQYCYGKSIVQYHAVPNPKGGPPLRDKNSQEYILGTSLPPSSHSQKGKQIEVPNNEQKQLSPPPNTELQAKDNQRYLVQRLDGGTICDLTGRPRTIEIQYHCNPALSGDRIGWIKEVTTCAYLMVIHTPRLCADVAFLPPKETKAHPITCRQIITSDEEALSFNQRRKNTIDSAAAAAAAVTTEDQKQGSESGSPEKLSYQGLTVAGIPIGARRILPSTHVLPLPRHLQQQRQEAQQGNLLEALTKAAFKADVFGDYGDDNNNNNNNHHPKAGKGRKAAGAGKGQSGQKEMKKMRISERDIDKLGLDQQTLDALREEIRAAGLDPDRNLNDEREAGGEIVWEFYADVSGDEDDGAVAEEGKEVFVWYEDEDEGGEPAEAGKDQKESKKGGNGEGSGSGSEEGSKEEYYRDEL</sequence>